<accession>Q3UVX5</accession>
<protein>
    <recommendedName>
        <fullName>Metabotropic glutamate receptor 5</fullName>
        <shortName>mGluR5</shortName>
    </recommendedName>
</protein>
<organism>
    <name type="scientific">Mus musculus</name>
    <name type="common">Mouse</name>
    <dbReference type="NCBI Taxonomy" id="10090"/>
    <lineage>
        <taxon>Eukaryota</taxon>
        <taxon>Metazoa</taxon>
        <taxon>Chordata</taxon>
        <taxon>Craniata</taxon>
        <taxon>Vertebrata</taxon>
        <taxon>Euteleostomi</taxon>
        <taxon>Mammalia</taxon>
        <taxon>Eutheria</taxon>
        <taxon>Euarchontoglires</taxon>
        <taxon>Glires</taxon>
        <taxon>Rodentia</taxon>
        <taxon>Myomorpha</taxon>
        <taxon>Muroidea</taxon>
        <taxon>Muridae</taxon>
        <taxon>Murinae</taxon>
        <taxon>Mus</taxon>
        <taxon>Mus</taxon>
    </lineage>
</organism>
<evidence type="ECO:0000250" key="1"/>
<evidence type="ECO:0000250" key="2">
    <source>
        <dbReference type="UniProtKB" id="P31424"/>
    </source>
</evidence>
<evidence type="ECO:0000250" key="3">
    <source>
        <dbReference type="UniProtKB" id="P41594"/>
    </source>
</evidence>
<evidence type="ECO:0000255" key="4"/>
<evidence type="ECO:0000256" key="5">
    <source>
        <dbReference type="SAM" id="MobiDB-lite"/>
    </source>
</evidence>
<evidence type="ECO:0000303" key="6">
    <source>
    </source>
</evidence>
<evidence type="ECO:0000305" key="7"/>
<evidence type="ECO:0007744" key="8">
    <source>
    </source>
</evidence>
<evidence type="ECO:0007744" key="9">
    <source>
    </source>
</evidence>
<gene>
    <name type="primary">Grm5</name>
    <name type="synonym">Gprc1e</name>
    <name type="synonym">Mglur5</name>
</gene>
<proteinExistence type="evidence at protein level"/>
<keyword id="KW-0025">Alternative splicing</keyword>
<keyword id="KW-1003">Cell membrane</keyword>
<keyword id="KW-1015">Disulfide bond</keyword>
<keyword id="KW-0297">G-protein coupled receptor</keyword>
<keyword id="KW-0325">Glycoprotein</keyword>
<keyword id="KW-0472">Membrane</keyword>
<keyword id="KW-0488">Methylation</keyword>
<keyword id="KW-0597">Phosphoprotein</keyword>
<keyword id="KW-0675">Receptor</keyword>
<keyword id="KW-1185">Reference proteome</keyword>
<keyword id="KW-0732">Signal</keyword>
<keyword id="KW-0807">Transducer</keyword>
<keyword id="KW-0812">Transmembrane</keyword>
<keyword id="KW-1133">Transmembrane helix</keyword>
<comment type="function">
    <text evidence="1">G-protein coupled receptor for glutamate. Ligand binding causes a conformation change that triggers signaling via guanine nucleotide-binding proteins (G proteins) and modulates the activity of down-stream effectors. Signaling activates a phosphatidylinositol-calcium second messenger system and generates a calcium-activated chloride current. Plays an important role in the regulation of synaptic plasticity and the modulation of the neural network activity (By similarity).</text>
</comment>
<comment type="subunit">
    <text evidence="1 2 3">The PPXXF motif binds HOMER1, HOMER2 and HOMER3. Interacts with RYR1, RYR2, ITPR1, SHANK1 and SHANK3 (By similarity). Interacts with SIAH1 and TAMALIN. Interacts with NCDN. Interacts with NECAB2 (By similarity). Interacts with CAMK2A (By similarity).</text>
</comment>
<comment type="interaction">
    <interactant intactId="EBI-8795045">
        <id>Q3UVX5</id>
    </interactant>
    <interactant intactId="EBI-1798780">
        <id>P16056</id>
        <label>Met</label>
    </interactant>
    <organismsDiffer>false</organismsDiffer>
    <experiments>3</experiments>
</comment>
<comment type="interaction">
    <interactant intactId="EBI-8795045">
        <id>Q3UVX5</id>
    </interactant>
    <interactant intactId="EBI-2338940">
        <id>Q9Z214</id>
        <label>Homer1</label>
    </interactant>
    <organismsDiffer>true</organismsDiffer>
    <experiments>2</experiments>
</comment>
<comment type="interaction">
    <interactant intactId="EBI-8795045">
        <id>Q3UVX5</id>
    </interactant>
    <interactant intactId="EBI-4410552">
        <id>Q9Z214-1</id>
        <label>Homer1</label>
    </interactant>
    <organismsDiffer>true</organismsDiffer>
    <experiments>3</experiments>
</comment>
<comment type="interaction">
    <interactant intactId="EBI-8795045">
        <id>Q3UVX5</id>
    </interactant>
    <interactant intactId="EBI-2339003">
        <id>Q9Z214-3</id>
        <label>Homer1</label>
    </interactant>
    <organismsDiffer>true</organismsDiffer>
    <experiments>2</experiments>
</comment>
<comment type="interaction">
    <interactant intactId="EBI-8795045">
        <id>Q3UVX5</id>
    </interactant>
    <interactant intactId="EBI-714158">
        <id>Q13526</id>
        <label>PIN1</label>
    </interactant>
    <organismsDiffer>true</organismsDiffer>
    <experiments>2</experiments>
</comment>
<comment type="subcellular location">
    <subcellularLocation>
        <location evidence="1">Cell membrane</location>
        <topology evidence="1">Multi-pass membrane protein</topology>
    </subcellularLocation>
</comment>
<comment type="alternative products">
    <event type="alternative splicing"/>
    <isoform>
        <id>Q3UVX5-1</id>
        <name>1</name>
        <sequence type="displayed"/>
    </isoform>
    <isoform>
        <id>Q3UVX5-2</id>
        <name>2</name>
        <sequence type="described" ref="VSP_028519 VSP_028520"/>
    </isoform>
</comment>
<comment type="similarity">
    <text evidence="7">Belongs to the G-protein coupled receptor 3 family.</text>
</comment>
<name>GRM5_MOUSE</name>
<feature type="signal peptide" evidence="4">
    <location>
        <begin position="1"/>
        <end position="18"/>
    </location>
</feature>
<feature type="chain" id="PRO_0000306853" description="Metabotropic glutamate receptor 5">
    <location>
        <begin position="19"/>
        <end position="1203"/>
    </location>
</feature>
<feature type="topological domain" description="Extracellular" evidence="1">
    <location>
        <begin position="19"/>
        <end position="579"/>
    </location>
</feature>
<feature type="transmembrane region" description="Helical; Name=1" evidence="1">
    <location>
        <begin position="580"/>
        <end position="602"/>
    </location>
</feature>
<feature type="topological domain" description="Cytoplasmic" evidence="1">
    <location>
        <begin position="603"/>
        <end position="612"/>
    </location>
</feature>
<feature type="transmembrane region" description="Helical; Name=2" evidence="1">
    <location>
        <begin position="613"/>
        <end position="635"/>
    </location>
</feature>
<feature type="topological domain" description="Extracellular" evidence="1">
    <location>
        <begin position="636"/>
        <end position="643"/>
    </location>
</feature>
<feature type="transmembrane region" description="Helical; Name=3" evidence="1">
    <location>
        <begin position="644"/>
        <end position="666"/>
    </location>
</feature>
<feature type="topological domain" description="Cytoplasmic" evidence="1">
    <location>
        <begin position="667"/>
        <end position="692"/>
    </location>
</feature>
<feature type="transmembrane region" description="Helical; Name=4" evidence="1">
    <location>
        <begin position="693"/>
        <end position="713"/>
    </location>
</feature>
<feature type="topological domain" description="Extracellular" evidence="1">
    <location>
        <begin position="714"/>
        <end position="736"/>
    </location>
</feature>
<feature type="transmembrane region" description="Helical; Name=5" evidence="1">
    <location>
        <begin position="737"/>
        <end position="758"/>
    </location>
</feature>
<feature type="topological domain" description="Cytoplasmic" evidence="1">
    <location>
        <begin position="759"/>
        <end position="771"/>
    </location>
</feature>
<feature type="transmembrane region" description="Helical; Name=6" evidence="1">
    <location>
        <begin position="772"/>
        <end position="794"/>
    </location>
</feature>
<feature type="topological domain" description="Extracellular" evidence="1">
    <location>
        <begin position="795"/>
        <end position="797"/>
    </location>
</feature>
<feature type="transmembrane region" description="Helical; Name=7" evidence="1">
    <location>
        <begin position="798"/>
        <end position="819"/>
    </location>
</feature>
<feature type="topological domain" description="Cytoplasmic" evidence="1">
    <location>
        <begin position="820"/>
        <end position="1203"/>
    </location>
</feature>
<feature type="region of interest" description="Disordered" evidence="5">
    <location>
        <begin position="892"/>
        <end position="1054"/>
    </location>
</feature>
<feature type="region of interest" description="Disordered" evidence="5">
    <location>
        <begin position="1120"/>
        <end position="1182"/>
    </location>
</feature>
<feature type="compositionally biased region" description="Polar residues" evidence="5">
    <location>
        <begin position="905"/>
        <end position="920"/>
    </location>
</feature>
<feature type="compositionally biased region" description="Gly residues" evidence="5">
    <location>
        <begin position="960"/>
        <end position="977"/>
    </location>
</feature>
<feature type="compositionally biased region" description="Low complexity" evidence="5">
    <location>
        <begin position="1007"/>
        <end position="1019"/>
    </location>
</feature>
<feature type="compositionally biased region" description="Polar residues" evidence="5">
    <location>
        <begin position="1039"/>
        <end position="1054"/>
    </location>
</feature>
<feature type="compositionally biased region" description="Polar residues" evidence="5">
    <location>
        <begin position="1165"/>
        <end position="1176"/>
    </location>
</feature>
<feature type="binding site" evidence="1">
    <location>
        <position position="64"/>
    </location>
    <ligand>
        <name>L-glutamate</name>
        <dbReference type="ChEBI" id="CHEBI:29985"/>
    </ligand>
</feature>
<feature type="binding site" evidence="1">
    <location>
        <position position="151"/>
    </location>
    <ligand>
        <name>L-glutamate</name>
        <dbReference type="ChEBI" id="CHEBI:29985"/>
    </ligand>
</feature>
<feature type="binding site" evidence="1">
    <location>
        <begin position="172"/>
        <end position="174"/>
    </location>
    <ligand>
        <name>L-glutamate</name>
        <dbReference type="ChEBI" id="CHEBI:29985"/>
    </ligand>
</feature>
<feature type="binding site" evidence="1">
    <location>
        <position position="222"/>
    </location>
    <ligand>
        <name>L-glutamate</name>
        <dbReference type="ChEBI" id="CHEBI:29985"/>
    </ligand>
</feature>
<feature type="binding site" evidence="1">
    <location>
        <position position="304"/>
    </location>
    <ligand>
        <name>L-glutamate</name>
        <dbReference type="ChEBI" id="CHEBI:29985"/>
    </ligand>
</feature>
<feature type="binding site" evidence="1">
    <location>
        <position position="395"/>
    </location>
    <ligand>
        <name>L-glutamate</name>
        <dbReference type="ChEBI" id="CHEBI:29985"/>
    </ligand>
</feature>
<feature type="modified residue" description="Phosphoserine" evidence="2">
    <location>
        <position position="860"/>
    </location>
</feature>
<feature type="modified residue" description="Omega-N-methylarginine" evidence="9">
    <location>
        <position position="868"/>
    </location>
</feature>
<feature type="modified residue" description="Omega-N-methylarginine" evidence="9">
    <location>
        <position position="924"/>
    </location>
</feature>
<feature type="modified residue" description="Phosphoserine" evidence="8">
    <location>
        <position position="1014"/>
    </location>
</feature>
<feature type="modified residue" description="Phosphoserine" evidence="8">
    <location>
        <position position="1016"/>
    </location>
</feature>
<feature type="glycosylation site" description="N-linked (GlcNAc...) asparagine" evidence="4">
    <location>
        <position position="88"/>
    </location>
</feature>
<feature type="glycosylation site" description="N-linked (GlcNAc...) asparagine" evidence="4">
    <location>
        <position position="209"/>
    </location>
</feature>
<feature type="glycosylation site" description="N-linked (GlcNAc...) asparagine" evidence="4">
    <location>
        <position position="377"/>
    </location>
</feature>
<feature type="glycosylation site" description="N-linked (GlcNAc...) asparagine" evidence="4">
    <location>
        <position position="381"/>
    </location>
</feature>
<feature type="glycosylation site" description="N-linked (GlcNAc...) asparagine" evidence="4">
    <location>
        <position position="444"/>
    </location>
</feature>
<feature type="glycosylation site" description="N-linked (GlcNAc...) asparagine" evidence="4">
    <location>
        <position position="733"/>
    </location>
</feature>
<feature type="disulfide bond" evidence="1">
    <location>
        <begin position="57"/>
        <end position="99"/>
    </location>
</feature>
<feature type="disulfide bond" evidence="1">
    <location>
        <begin position="240"/>
        <end position="529"/>
    </location>
</feature>
<feature type="disulfide bond" evidence="1">
    <location>
        <begin position="275"/>
        <end position="277"/>
    </location>
</feature>
<feature type="disulfide bond" evidence="1">
    <location>
        <begin position="364"/>
        <end position="380"/>
    </location>
</feature>
<feature type="disulfide bond" evidence="1">
    <location>
        <begin position="418"/>
        <end position="425"/>
    </location>
</feature>
<feature type="disulfide bond" evidence="1">
    <location>
        <begin position="510"/>
        <end position="530"/>
    </location>
</feature>
<feature type="disulfide bond" evidence="1">
    <location>
        <begin position="514"/>
        <end position="533"/>
    </location>
</feature>
<feature type="disulfide bond" evidence="1">
    <location>
        <begin position="536"/>
        <end position="548"/>
    </location>
</feature>
<feature type="disulfide bond" evidence="1">
    <location>
        <begin position="551"/>
        <end position="564"/>
    </location>
</feature>
<feature type="disulfide bond" evidence="1">
    <location>
        <begin position="643"/>
        <end position="732"/>
    </location>
</feature>
<feature type="splice variant" id="VSP_028519" description="In isoform 2." evidence="6">
    <original>S</original>
    <variation>R</variation>
    <location>
        <position position="303"/>
    </location>
</feature>
<feature type="splice variant" id="VSP_028520" description="In isoform 2." evidence="6">
    <location>
        <begin position="304"/>
        <end position="1203"/>
    </location>
</feature>
<reference key="1">
    <citation type="journal article" date="2005" name="Science">
        <title>The transcriptional landscape of the mammalian genome.</title>
        <authorList>
            <person name="Carninci P."/>
            <person name="Kasukawa T."/>
            <person name="Katayama S."/>
            <person name="Gough J."/>
            <person name="Frith M.C."/>
            <person name="Maeda N."/>
            <person name="Oyama R."/>
            <person name="Ravasi T."/>
            <person name="Lenhard B."/>
            <person name="Wells C."/>
            <person name="Kodzius R."/>
            <person name="Shimokawa K."/>
            <person name="Bajic V.B."/>
            <person name="Brenner S.E."/>
            <person name="Batalov S."/>
            <person name="Forrest A.R."/>
            <person name="Zavolan M."/>
            <person name="Davis M.J."/>
            <person name="Wilming L.G."/>
            <person name="Aidinis V."/>
            <person name="Allen J.E."/>
            <person name="Ambesi-Impiombato A."/>
            <person name="Apweiler R."/>
            <person name="Aturaliya R.N."/>
            <person name="Bailey T.L."/>
            <person name="Bansal M."/>
            <person name="Baxter L."/>
            <person name="Beisel K.W."/>
            <person name="Bersano T."/>
            <person name="Bono H."/>
            <person name="Chalk A.M."/>
            <person name="Chiu K.P."/>
            <person name="Choudhary V."/>
            <person name="Christoffels A."/>
            <person name="Clutterbuck D.R."/>
            <person name="Crowe M.L."/>
            <person name="Dalla E."/>
            <person name="Dalrymple B.P."/>
            <person name="de Bono B."/>
            <person name="Della Gatta G."/>
            <person name="di Bernardo D."/>
            <person name="Down T."/>
            <person name="Engstrom P."/>
            <person name="Fagiolini M."/>
            <person name="Faulkner G."/>
            <person name="Fletcher C.F."/>
            <person name="Fukushima T."/>
            <person name="Furuno M."/>
            <person name="Futaki S."/>
            <person name="Gariboldi M."/>
            <person name="Georgii-Hemming P."/>
            <person name="Gingeras T.R."/>
            <person name="Gojobori T."/>
            <person name="Green R.E."/>
            <person name="Gustincich S."/>
            <person name="Harbers M."/>
            <person name="Hayashi Y."/>
            <person name="Hensch T.K."/>
            <person name="Hirokawa N."/>
            <person name="Hill D."/>
            <person name="Huminiecki L."/>
            <person name="Iacono M."/>
            <person name="Ikeo K."/>
            <person name="Iwama A."/>
            <person name="Ishikawa T."/>
            <person name="Jakt M."/>
            <person name="Kanapin A."/>
            <person name="Katoh M."/>
            <person name="Kawasawa Y."/>
            <person name="Kelso J."/>
            <person name="Kitamura H."/>
            <person name="Kitano H."/>
            <person name="Kollias G."/>
            <person name="Krishnan S.P."/>
            <person name="Kruger A."/>
            <person name="Kummerfeld S.K."/>
            <person name="Kurochkin I.V."/>
            <person name="Lareau L.F."/>
            <person name="Lazarevic D."/>
            <person name="Lipovich L."/>
            <person name="Liu J."/>
            <person name="Liuni S."/>
            <person name="McWilliam S."/>
            <person name="Madan Babu M."/>
            <person name="Madera M."/>
            <person name="Marchionni L."/>
            <person name="Matsuda H."/>
            <person name="Matsuzawa S."/>
            <person name="Miki H."/>
            <person name="Mignone F."/>
            <person name="Miyake S."/>
            <person name="Morris K."/>
            <person name="Mottagui-Tabar S."/>
            <person name="Mulder N."/>
            <person name="Nakano N."/>
            <person name="Nakauchi H."/>
            <person name="Ng P."/>
            <person name="Nilsson R."/>
            <person name="Nishiguchi S."/>
            <person name="Nishikawa S."/>
            <person name="Nori F."/>
            <person name="Ohara O."/>
            <person name="Okazaki Y."/>
            <person name="Orlando V."/>
            <person name="Pang K.C."/>
            <person name="Pavan W.J."/>
            <person name="Pavesi G."/>
            <person name="Pesole G."/>
            <person name="Petrovsky N."/>
            <person name="Piazza S."/>
            <person name="Reed J."/>
            <person name="Reid J.F."/>
            <person name="Ring B.Z."/>
            <person name="Ringwald M."/>
            <person name="Rost B."/>
            <person name="Ruan Y."/>
            <person name="Salzberg S.L."/>
            <person name="Sandelin A."/>
            <person name="Schneider C."/>
            <person name="Schoenbach C."/>
            <person name="Sekiguchi K."/>
            <person name="Semple C.A."/>
            <person name="Seno S."/>
            <person name="Sessa L."/>
            <person name="Sheng Y."/>
            <person name="Shibata Y."/>
            <person name="Shimada H."/>
            <person name="Shimada K."/>
            <person name="Silva D."/>
            <person name="Sinclair B."/>
            <person name="Sperling S."/>
            <person name="Stupka E."/>
            <person name="Sugiura K."/>
            <person name="Sultana R."/>
            <person name="Takenaka Y."/>
            <person name="Taki K."/>
            <person name="Tammoja K."/>
            <person name="Tan S.L."/>
            <person name="Tang S."/>
            <person name="Taylor M.S."/>
            <person name="Tegner J."/>
            <person name="Teichmann S.A."/>
            <person name="Ueda H.R."/>
            <person name="van Nimwegen E."/>
            <person name="Verardo R."/>
            <person name="Wei C.L."/>
            <person name="Yagi K."/>
            <person name="Yamanishi H."/>
            <person name="Zabarovsky E."/>
            <person name="Zhu S."/>
            <person name="Zimmer A."/>
            <person name="Hide W."/>
            <person name="Bult C."/>
            <person name="Grimmond S.M."/>
            <person name="Teasdale R.D."/>
            <person name="Liu E.T."/>
            <person name="Brusic V."/>
            <person name="Quackenbush J."/>
            <person name="Wahlestedt C."/>
            <person name="Mattick J.S."/>
            <person name="Hume D.A."/>
            <person name="Kai C."/>
            <person name="Sasaki D."/>
            <person name="Tomaru Y."/>
            <person name="Fukuda S."/>
            <person name="Kanamori-Katayama M."/>
            <person name="Suzuki M."/>
            <person name="Aoki J."/>
            <person name="Arakawa T."/>
            <person name="Iida J."/>
            <person name="Imamura K."/>
            <person name="Itoh M."/>
            <person name="Kato T."/>
            <person name="Kawaji H."/>
            <person name="Kawagashira N."/>
            <person name="Kawashima T."/>
            <person name="Kojima M."/>
            <person name="Kondo S."/>
            <person name="Konno H."/>
            <person name="Nakano K."/>
            <person name="Ninomiya N."/>
            <person name="Nishio T."/>
            <person name="Okada M."/>
            <person name="Plessy C."/>
            <person name="Shibata K."/>
            <person name="Shiraki T."/>
            <person name="Suzuki S."/>
            <person name="Tagami M."/>
            <person name="Waki K."/>
            <person name="Watahiki A."/>
            <person name="Okamura-Oho Y."/>
            <person name="Suzuki H."/>
            <person name="Kawai J."/>
            <person name="Hayashizaki Y."/>
        </authorList>
    </citation>
    <scope>NUCLEOTIDE SEQUENCE [LARGE SCALE MRNA] (ISOFORM 2)</scope>
    <source>
        <strain>C57BL/6J</strain>
        <tissue>Diencephalon</tissue>
    </source>
</reference>
<reference key="2">
    <citation type="journal article" date="2009" name="PLoS Biol.">
        <title>Lineage-specific biology revealed by a finished genome assembly of the mouse.</title>
        <authorList>
            <person name="Church D.M."/>
            <person name="Goodstadt L."/>
            <person name="Hillier L.W."/>
            <person name="Zody M.C."/>
            <person name="Goldstein S."/>
            <person name="She X."/>
            <person name="Bult C.J."/>
            <person name="Agarwala R."/>
            <person name="Cherry J.L."/>
            <person name="DiCuccio M."/>
            <person name="Hlavina W."/>
            <person name="Kapustin Y."/>
            <person name="Meric P."/>
            <person name="Maglott D."/>
            <person name="Birtle Z."/>
            <person name="Marques A.C."/>
            <person name="Graves T."/>
            <person name="Zhou S."/>
            <person name="Teague B."/>
            <person name="Potamousis K."/>
            <person name="Churas C."/>
            <person name="Place M."/>
            <person name="Herschleb J."/>
            <person name="Runnheim R."/>
            <person name="Forrest D."/>
            <person name="Amos-Landgraf J."/>
            <person name="Schwartz D.C."/>
            <person name="Cheng Z."/>
            <person name="Lindblad-Toh K."/>
            <person name="Eichler E.E."/>
            <person name="Ponting C.P."/>
        </authorList>
    </citation>
    <scope>NUCLEOTIDE SEQUENCE [LARGE SCALE GENOMIC DNA]</scope>
    <source>
        <strain>C57BL/6J</strain>
    </source>
</reference>
<reference key="3">
    <citation type="journal article" date="2010" name="Cell">
        <title>A tissue-specific atlas of mouse protein phosphorylation and expression.</title>
        <authorList>
            <person name="Huttlin E.L."/>
            <person name="Jedrychowski M.P."/>
            <person name="Elias J.E."/>
            <person name="Goswami T."/>
            <person name="Rad R."/>
            <person name="Beausoleil S.A."/>
            <person name="Villen J."/>
            <person name="Haas W."/>
            <person name="Sowa M.E."/>
            <person name="Gygi S.P."/>
        </authorList>
    </citation>
    <scope>PHOSPHORYLATION [LARGE SCALE ANALYSIS] AT SER-1014 AND SER-1016</scope>
    <scope>IDENTIFICATION BY MASS SPECTROMETRY [LARGE SCALE ANALYSIS]</scope>
    <source>
        <tissue>Brain</tissue>
    </source>
</reference>
<reference key="4">
    <citation type="journal article" date="2014" name="Mol. Cell. Proteomics">
        <title>Immunoaffinity enrichment and mass spectrometry analysis of protein methylation.</title>
        <authorList>
            <person name="Guo A."/>
            <person name="Gu H."/>
            <person name="Zhou J."/>
            <person name="Mulhern D."/>
            <person name="Wang Y."/>
            <person name="Lee K.A."/>
            <person name="Yang V."/>
            <person name="Aguiar M."/>
            <person name="Kornhauser J."/>
            <person name="Jia X."/>
            <person name="Ren J."/>
            <person name="Beausoleil S.A."/>
            <person name="Silva J.C."/>
            <person name="Vemulapalli V."/>
            <person name="Bedford M.T."/>
            <person name="Comb M.J."/>
        </authorList>
    </citation>
    <scope>METHYLATION [LARGE SCALE ANALYSIS] AT ARG-868 AND ARG-924</scope>
    <scope>IDENTIFICATION BY MASS SPECTROMETRY [LARGE SCALE ANALYSIS]</scope>
    <source>
        <tissue>Brain</tissue>
    </source>
</reference>
<dbReference type="EMBL" id="AK136840">
    <property type="protein sequence ID" value="BAE23144.1"/>
    <property type="molecule type" value="mRNA"/>
</dbReference>
<dbReference type="EMBL" id="AC113033">
    <property type="status" value="NOT_ANNOTATED_CDS"/>
    <property type="molecule type" value="Genomic_DNA"/>
</dbReference>
<dbReference type="EMBL" id="AC113115">
    <property type="status" value="NOT_ANNOTATED_CDS"/>
    <property type="molecule type" value="Genomic_DNA"/>
</dbReference>
<dbReference type="EMBL" id="AC116820">
    <property type="status" value="NOT_ANNOTATED_CDS"/>
    <property type="molecule type" value="Genomic_DNA"/>
</dbReference>
<dbReference type="EMBL" id="AC149088">
    <property type="status" value="NOT_ANNOTATED_CDS"/>
    <property type="molecule type" value="Genomic_DNA"/>
</dbReference>
<dbReference type="EMBL" id="AC163218">
    <property type="status" value="NOT_ANNOTATED_CDS"/>
    <property type="molecule type" value="Genomic_DNA"/>
</dbReference>
<dbReference type="CCDS" id="CCDS52305.1">
    <molecule id="Q3UVX5-1"/>
</dbReference>
<dbReference type="RefSeq" id="NP_001137306.1">
    <molecule id="Q3UVX5-1"/>
    <property type="nucleotide sequence ID" value="NM_001143834.1"/>
</dbReference>
<dbReference type="RefSeq" id="XP_011239945.1">
    <molecule id="Q3UVX5-1"/>
    <property type="nucleotide sequence ID" value="XM_011241643.4"/>
</dbReference>
<dbReference type="RefSeq" id="XP_036008452.1">
    <molecule id="Q3UVX5-1"/>
    <property type="nucleotide sequence ID" value="XM_036152559.1"/>
</dbReference>
<dbReference type="RefSeq" id="XP_036008453.1">
    <molecule id="Q3UVX5-1"/>
    <property type="nucleotide sequence ID" value="XM_036152560.1"/>
</dbReference>
<dbReference type="SMR" id="Q3UVX5"/>
<dbReference type="BioGRID" id="223809">
    <property type="interactions" value="20"/>
</dbReference>
<dbReference type="CORUM" id="Q3UVX5"/>
<dbReference type="FunCoup" id="Q3UVX5">
    <property type="interactions" value="881"/>
</dbReference>
<dbReference type="IntAct" id="Q3UVX5">
    <property type="interactions" value="10"/>
</dbReference>
<dbReference type="MINT" id="Q3UVX5"/>
<dbReference type="STRING" id="10090.ENSMUSP00000114927"/>
<dbReference type="BindingDB" id="Q3UVX5"/>
<dbReference type="ChEMBL" id="CHEMBL1641352"/>
<dbReference type="GuidetoPHARMACOLOGY" id="293"/>
<dbReference type="GlyConnect" id="2510">
    <property type="glycosylation" value="1 N-Linked glycan (1 site)"/>
</dbReference>
<dbReference type="GlyCosmos" id="Q3UVX5">
    <property type="glycosylation" value="6 sites, 1 glycan"/>
</dbReference>
<dbReference type="GlyGen" id="Q3UVX5">
    <property type="glycosylation" value="12 sites, 7 N-linked glycans (6 sites), 1 O-linked glycan (5 sites)"/>
</dbReference>
<dbReference type="iPTMnet" id="Q3UVX5"/>
<dbReference type="PhosphoSitePlus" id="Q3UVX5"/>
<dbReference type="SwissPalm" id="Q3UVX5"/>
<dbReference type="PaxDb" id="10090-ENSMUSP00000129181"/>
<dbReference type="PeptideAtlas" id="Q3UVX5"/>
<dbReference type="ProteomicsDB" id="271305">
    <molecule id="Q3UVX5-1"/>
</dbReference>
<dbReference type="ProteomicsDB" id="271306">
    <molecule id="Q3UVX5-2"/>
</dbReference>
<dbReference type="ABCD" id="Q3UVX5">
    <property type="antibodies" value="2 sequenced antibodies"/>
</dbReference>
<dbReference type="Antibodypedia" id="2950">
    <property type="antibodies" value="549 antibodies from 44 providers"/>
</dbReference>
<dbReference type="Ensembl" id="ENSMUST00000155358.3">
    <molecule id="Q3UVX5-1"/>
    <property type="protein sequence ID" value="ENSMUSP00000114927.3"/>
    <property type="gene ID" value="ENSMUSG00000049583.16"/>
</dbReference>
<dbReference type="GeneID" id="108071"/>
<dbReference type="KEGG" id="mmu:108071"/>
<dbReference type="UCSC" id="uc009ifp.2">
    <molecule id="Q3UVX5-2"/>
    <property type="organism name" value="mouse"/>
</dbReference>
<dbReference type="UCSC" id="uc009ifs.2">
    <molecule id="Q3UVX5-1"/>
    <property type="organism name" value="mouse"/>
</dbReference>
<dbReference type="AGR" id="MGI:1351342"/>
<dbReference type="CTD" id="2915"/>
<dbReference type="MGI" id="MGI:1351342">
    <property type="gene designation" value="Grm5"/>
</dbReference>
<dbReference type="VEuPathDB" id="HostDB:ENSMUSG00000049583"/>
<dbReference type="eggNOG" id="KOG1056">
    <property type="taxonomic scope" value="Eukaryota"/>
</dbReference>
<dbReference type="GeneTree" id="ENSGT01030000234595"/>
<dbReference type="InParanoid" id="Q3UVX5"/>
<dbReference type="OMA" id="NGDSPGX"/>
<dbReference type="OrthoDB" id="425344at2759"/>
<dbReference type="PhylomeDB" id="Q3UVX5"/>
<dbReference type="TreeFam" id="TF313240"/>
<dbReference type="Reactome" id="R-MMU-416476">
    <property type="pathway name" value="G alpha (q) signalling events"/>
</dbReference>
<dbReference type="Reactome" id="R-MMU-420499">
    <property type="pathway name" value="Class C/3 (Metabotropic glutamate/pheromone receptors)"/>
</dbReference>
<dbReference type="Reactome" id="R-MMU-6794361">
    <property type="pathway name" value="Neurexins and neuroligins"/>
</dbReference>
<dbReference type="BioGRID-ORCS" id="108071">
    <property type="hits" value="1 hit in 80 CRISPR screens"/>
</dbReference>
<dbReference type="CD-CODE" id="CE726F99">
    <property type="entry name" value="Postsynaptic density"/>
</dbReference>
<dbReference type="ChiTaRS" id="Grm5">
    <property type="organism name" value="mouse"/>
</dbReference>
<dbReference type="PRO" id="PR:Q3UVX5"/>
<dbReference type="Proteomes" id="UP000000589">
    <property type="component" value="Chromosome 7"/>
</dbReference>
<dbReference type="RNAct" id="Q3UVX5">
    <property type="molecule type" value="protein"/>
</dbReference>
<dbReference type="Bgee" id="ENSMUSG00000049583">
    <property type="expression patterns" value="Expressed in lateral septal nucleus and 79 other cell types or tissues"/>
</dbReference>
<dbReference type="ExpressionAtlas" id="Q3UVX5">
    <property type="expression patterns" value="baseline and differential"/>
</dbReference>
<dbReference type="GO" id="GO:0097449">
    <property type="term" value="C:astrocyte projection"/>
    <property type="evidence" value="ECO:0007669"/>
    <property type="project" value="Ensembl"/>
</dbReference>
<dbReference type="GO" id="GO:0005737">
    <property type="term" value="C:cytoplasm"/>
    <property type="evidence" value="ECO:0000314"/>
    <property type="project" value="MGI"/>
</dbReference>
<dbReference type="GO" id="GO:0030425">
    <property type="term" value="C:dendrite"/>
    <property type="evidence" value="ECO:0000314"/>
    <property type="project" value="ARUK-UCL"/>
</dbReference>
<dbReference type="GO" id="GO:0043198">
    <property type="term" value="C:dendritic shaft"/>
    <property type="evidence" value="ECO:0007669"/>
    <property type="project" value="Ensembl"/>
</dbReference>
<dbReference type="GO" id="GO:0043197">
    <property type="term" value="C:dendritic spine"/>
    <property type="evidence" value="ECO:0007669"/>
    <property type="project" value="Ensembl"/>
</dbReference>
<dbReference type="GO" id="GO:0098978">
    <property type="term" value="C:glutamatergic synapse"/>
    <property type="evidence" value="ECO:0007669"/>
    <property type="project" value="Ensembl"/>
</dbReference>
<dbReference type="GO" id="GO:0043005">
    <property type="term" value="C:neuron projection"/>
    <property type="evidence" value="ECO:0000314"/>
    <property type="project" value="BHF-UCL"/>
</dbReference>
<dbReference type="GO" id="GO:0043025">
    <property type="term" value="C:neuronal cell body"/>
    <property type="evidence" value="ECO:0007669"/>
    <property type="project" value="Ensembl"/>
</dbReference>
<dbReference type="GO" id="GO:0005886">
    <property type="term" value="C:plasma membrane"/>
    <property type="evidence" value="ECO:0000314"/>
    <property type="project" value="MGI"/>
</dbReference>
<dbReference type="GO" id="GO:0045211">
    <property type="term" value="C:postsynaptic membrane"/>
    <property type="evidence" value="ECO:0007669"/>
    <property type="project" value="Ensembl"/>
</dbReference>
<dbReference type="GO" id="GO:0098685">
    <property type="term" value="C:Schaffer collateral - CA1 synapse"/>
    <property type="evidence" value="ECO:0000314"/>
    <property type="project" value="SynGO"/>
</dbReference>
<dbReference type="GO" id="GO:0031687">
    <property type="term" value="F:A2A adenosine receptor binding"/>
    <property type="evidence" value="ECO:0007669"/>
    <property type="project" value="Ensembl"/>
</dbReference>
<dbReference type="GO" id="GO:0004930">
    <property type="term" value="F:G protein-coupled receptor activity"/>
    <property type="evidence" value="ECO:0000250"/>
    <property type="project" value="UniProtKB"/>
</dbReference>
<dbReference type="GO" id="GO:0008066">
    <property type="term" value="F:glutamate receptor activity"/>
    <property type="evidence" value="ECO:0000250"/>
    <property type="project" value="UniProtKB"/>
</dbReference>
<dbReference type="GO" id="GO:0042802">
    <property type="term" value="F:identical protein binding"/>
    <property type="evidence" value="ECO:0007669"/>
    <property type="project" value="Ensembl"/>
</dbReference>
<dbReference type="GO" id="GO:0001639">
    <property type="term" value="F:PLC activating G protein-coupled glutamate receptor activity"/>
    <property type="evidence" value="ECO:0000304"/>
    <property type="project" value="MGI"/>
</dbReference>
<dbReference type="GO" id="GO:0030296">
    <property type="term" value="F:protein tyrosine kinase activator activity"/>
    <property type="evidence" value="ECO:0000316"/>
    <property type="project" value="ARUK-UCL"/>
</dbReference>
<dbReference type="GO" id="GO:1990782">
    <property type="term" value="F:protein tyrosine kinase binding"/>
    <property type="evidence" value="ECO:0007669"/>
    <property type="project" value="Ensembl"/>
</dbReference>
<dbReference type="GO" id="GO:1904646">
    <property type="term" value="P:cellular response to amyloid-beta"/>
    <property type="evidence" value="ECO:0000316"/>
    <property type="project" value="ARUK-UCL"/>
</dbReference>
<dbReference type="GO" id="GO:0007268">
    <property type="term" value="P:chemical synaptic transmission"/>
    <property type="evidence" value="ECO:0007669"/>
    <property type="project" value="Ensembl"/>
</dbReference>
<dbReference type="GO" id="GO:0002029">
    <property type="term" value="P:desensitization of G protein-coupled receptor signaling pathway"/>
    <property type="evidence" value="ECO:0007669"/>
    <property type="project" value="Ensembl"/>
</dbReference>
<dbReference type="GO" id="GO:0007216">
    <property type="term" value="P:G protein-coupled glutamate receptor signaling pathway"/>
    <property type="evidence" value="ECO:0000250"/>
    <property type="project" value="UniProtKB"/>
</dbReference>
<dbReference type="GO" id="GO:0007612">
    <property type="term" value="P:learning"/>
    <property type="evidence" value="ECO:0000315"/>
    <property type="project" value="MGI"/>
</dbReference>
<dbReference type="GO" id="GO:0007611">
    <property type="term" value="P:learning or memory"/>
    <property type="evidence" value="ECO:0000316"/>
    <property type="project" value="ARUK-UCL"/>
</dbReference>
<dbReference type="GO" id="GO:0007626">
    <property type="term" value="P:locomotory behavior"/>
    <property type="evidence" value="ECO:0000315"/>
    <property type="project" value="MGI"/>
</dbReference>
<dbReference type="GO" id="GO:0050804">
    <property type="term" value="P:modulation of chemical synaptic transmission"/>
    <property type="evidence" value="ECO:0000314"/>
    <property type="project" value="SynGO"/>
</dbReference>
<dbReference type="GO" id="GO:0050850">
    <property type="term" value="P:positive regulation of calcium-mediated signaling"/>
    <property type="evidence" value="ECO:0000316"/>
    <property type="project" value="ARUK-UCL"/>
</dbReference>
<dbReference type="GO" id="GO:0048170">
    <property type="term" value="P:positive regulation of long-term neuronal synaptic plasticity"/>
    <property type="evidence" value="ECO:0007669"/>
    <property type="project" value="Ensembl"/>
</dbReference>
<dbReference type="GO" id="GO:0043410">
    <property type="term" value="P:positive regulation of MAPK cascade"/>
    <property type="evidence" value="ECO:0007669"/>
    <property type="project" value="Ensembl"/>
</dbReference>
<dbReference type="GO" id="GO:0006355">
    <property type="term" value="P:regulation of DNA-templated transcription"/>
    <property type="evidence" value="ECO:0007669"/>
    <property type="project" value="Ensembl"/>
</dbReference>
<dbReference type="GO" id="GO:0048169">
    <property type="term" value="P:regulation of long-term neuronal synaptic plasticity"/>
    <property type="evidence" value="ECO:0000315"/>
    <property type="project" value="MGI"/>
</dbReference>
<dbReference type="GO" id="GO:0050808">
    <property type="term" value="P:synapse organization"/>
    <property type="evidence" value="ECO:0000316"/>
    <property type="project" value="ARUK-UCL"/>
</dbReference>
<dbReference type="CDD" id="cd15450">
    <property type="entry name" value="7tmC_mGluR5"/>
    <property type="match status" value="1"/>
</dbReference>
<dbReference type="CDD" id="cd06374">
    <property type="entry name" value="PBP1_mGluR_groupI"/>
    <property type="match status" value="1"/>
</dbReference>
<dbReference type="FunFam" id="3.40.50.2300:FF:000219">
    <property type="entry name" value="Glutamate metabotropic receptor 5"/>
    <property type="match status" value="1"/>
</dbReference>
<dbReference type="FunFam" id="2.10.50.30:FF:000001">
    <property type="entry name" value="metabotropic glutamate receptor 1"/>
    <property type="match status" value="1"/>
</dbReference>
<dbReference type="FunFam" id="3.40.50.2300:FF:000243">
    <property type="entry name" value="Metabotropic glutamate receptor 5"/>
    <property type="match status" value="1"/>
</dbReference>
<dbReference type="Gene3D" id="3.40.50.2300">
    <property type="match status" value="2"/>
</dbReference>
<dbReference type="Gene3D" id="2.10.50.30">
    <property type="entry name" value="GPCR, family 3, nine cysteines domain"/>
    <property type="match status" value="1"/>
</dbReference>
<dbReference type="InterPro" id="IPR001828">
    <property type="entry name" value="ANF_lig-bd_rcpt"/>
</dbReference>
<dbReference type="InterPro" id="IPR000337">
    <property type="entry name" value="GPCR_3"/>
</dbReference>
<dbReference type="InterPro" id="IPR011500">
    <property type="entry name" value="GPCR_3_9-Cys_dom"/>
</dbReference>
<dbReference type="InterPro" id="IPR038550">
    <property type="entry name" value="GPCR_3_9-Cys_sf"/>
</dbReference>
<dbReference type="InterPro" id="IPR017978">
    <property type="entry name" value="GPCR_3_C"/>
</dbReference>
<dbReference type="InterPro" id="IPR017979">
    <property type="entry name" value="GPCR_3_CS"/>
</dbReference>
<dbReference type="InterPro" id="IPR000202">
    <property type="entry name" value="GPCR_3_mGluR5"/>
</dbReference>
<dbReference type="InterPro" id="IPR000162">
    <property type="entry name" value="GPCR_3_mtglu_rcpt"/>
</dbReference>
<dbReference type="InterPro" id="IPR019588">
    <property type="entry name" value="Metabotropic_Glu_rcpt_Homer-bd"/>
</dbReference>
<dbReference type="InterPro" id="IPR050726">
    <property type="entry name" value="mGluR"/>
</dbReference>
<dbReference type="InterPro" id="IPR028082">
    <property type="entry name" value="Peripla_BP_I"/>
</dbReference>
<dbReference type="PANTHER" id="PTHR24060">
    <property type="entry name" value="METABOTROPIC GLUTAMATE RECEPTOR"/>
    <property type="match status" value="1"/>
</dbReference>
<dbReference type="Pfam" id="PF00003">
    <property type="entry name" value="7tm_3"/>
    <property type="match status" value="1"/>
</dbReference>
<dbReference type="Pfam" id="PF01094">
    <property type="entry name" value="ANF_receptor"/>
    <property type="match status" value="1"/>
</dbReference>
<dbReference type="Pfam" id="PF10606">
    <property type="entry name" value="GluR_Homer-bdg"/>
    <property type="match status" value="1"/>
</dbReference>
<dbReference type="Pfam" id="PF07562">
    <property type="entry name" value="NCD3G"/>
    <property type="match status" value="1"/>
</dbReference>
<dbReference type="PRINTS" id="PR00248">
    <property type="entry name" value="GPCRMGR"/>
</dbReference>
<dbReference type="PRINTS" id="PR01055">
    <property type="entry name" value="MTABOTROPC5R"/>
</dbReference>
<dbReference type="PRINTS" id="PR00593">
    <property type="entry name" value="MTABOTROPICR"/>
</dbReference>
<dbReference type="SMART" id="SM01229">
    <property type="entry name" value="GluR_Homer-bdg"/>
    <property type="match status" value="1"/>
</dbReference>
<dbReference type="SUPFAM" id="SSF53822">
    <property type="entry name" value="Periplasmic binding protein-like I"/>
    <property type="match status" value="1"/>
</dbReference>
<dbReference type="PROSITE" id="PS00979">
    <property type="entry name" value="G_PROTEIN_RECEP_F3_1"/>
    <property type="match status" value="1"/>
</dbReference>
<dbReference type="PROSITE" id="PS00980">
    <property type="entry name" value="G_PROTEIN_RECEP_F3_2"/>
    <property type="match status" value="1"/>
</dbReference>
<dbReference type="PROSITE" id="PS00981">
    <property type="entry name" value="G_PROTEIN_RECEP_F3_3"/>
    <property type="match status" value="1"/>
</dbReference>
<dbReference type="PROSITE" id="PS50259">
    <property type="entry name" value="G_PROTEIN_RECEP_F3_4"/>
    <property type="match status" value="1"/>
</dbReference>
<sequence>MVLLLILSVLLLKEDVRGSAQSSERRVVAHMPGDIIIGALFSVHHQPTVDKVHERKCGAVREQYGIQRVEAMLHTLERINSDPTLLPNITLGCEIRDSCWHSAVALEQSIEFIRDSLISSEEEEGLVRCVDGSSSFRSKKPIVGVIGPGSSSVAIQVQNLLQLFNIPQIAYSATSMDLSDKTLFKYFMRVVPSDAQQARAMVDIVKRYNWTYVSAVHTEGNYGESGMEAFKDMSAKEGICIAHSYKIYSNAGEQSFDKLLKKLRSHLPKARVVACFCEGMTVRGLLMAMRRLGLAGEFLLLGSDGWADRYDVTDGYQREAVGGITIKLQSPDVKWFDDYYLKLRPETNLRNPWFQEFWQHRFQCRLEGFAQENSKYNKTCNSSLTLRTHHVQDSKMGFVINAIYSMAYGLHNMQMSLCPGYAGLCDAMKPIDGRKLLDSLMKTNFTGVSGDMILFDENGDSPGRYEIMNFKEMGKDYFDYINVGSWDNGELKMDDDEVWSKKNNIIRSVCSEPCEKGQIKVIRKGEVSCCWTCTPCKENEYVFDEYTCKACQLGSWPTDDLTGCDLIPVQYLRWGDPEPIAAVVFACLGLLATLFVTVIFIIYRDTPVVKSSSRELCYIILAGICLGYLCTFCLIAKPKQIYCYLQRIGIGLSPAMSYSALVTKTNRIARILAGSKKKICTKKPRFMSACAQLVIAFILICIQLGIIVALFIMEPPDIMHDYPSIREVYLICNTTNLGVVTPLGYNGLLILSCTFYAFKTRNVPANFNEAKYIAFTMYTTCIIWLAFVPIYFGSNYKIITMCFSVSLSATVALGCMFVPKVYIILAKPERNVRSAFTTSTVVRMHVGDGKSSSAASRSSSLVNLWKRRGSSGETLRYKDRRLAQHKSEIECFTPKGSMGNGGRATMSSSNGKSVTWAQNEKSTRGQHLWQRLSVHINKKENPNQTAVIKPFPKSTESRGQGAGAGGGSGPGAAGAGSAGCTATGGPEPPDAGPKALYDVAEAEERFPAAARPRSPSPISTLSHLAGSAGRTDDDAPSLHSETAARSSSSQGSLMEQISSVVTRFTANITELNSMMLSTAAAPGPPGTPICSSYLIPKEIQLPTTMTTFAEIQPLPAIEVTGGAQPATGPSPAQETPAGAEAAPGKPDLEELVALTPPSPFRDSVDSGSTTPNSPVSESALCIPSSPKYDTLIIRDYTQSSSSL</sequence>